<dbReference type="EMBL" id="DS480391">
    <property type="protein sequence ID" value="EDO18264.1"/>
    <property type="molecule type" value="Genomic_DNA"/>
</dbReference>
<dbReference type="RefSeq" id="XP_001646122.1">
    <property type="nucleotide sequence ID" value="XM_001646072.1"/>
</dbReference>
<dbReference type="SMR" id="A7THE0"/>
<dbReference type="FunCoup" id="A7THE0">
    <property type="interactions" value="299"/>
</dbReference>
<dbReference type="STRING" id="436907.A7THE0"/>
<dbReference type="GeneID" id="5546541"/>
<dbReference type="KEGG" id="vpo:Kpol_1039p13"/>
<dbReference type="eggNOG" id="ENOG502S1G1">
    <property type="taxonomic scope" value="Eukaryota"/>
</dbReference>
<dbReference type="HOGENOM" id="CLU_095038_0_0_1"/>
<dbReference type="InParanoid" id="A7THE0"/>
<dbReference type="OMA" id="GHAMEAK"/>
<dbReference type="PhylomeDB" id="A7THE0"/>
<dbReference type="Proteomes" id="UP000000267">
    <property type="component" value="Unassembled WGS sequence"/>
</dbReference>
<dbReference type="GO" id="GO:0005730">
    <property type="term" value="C:nucleolus"/>
    <property type="evidence" value="ECO:0007669"/>
    <property type="project" value="UniProtKB-SubCell"/>
</dbReference>
<dbReference type="InterPro" id="IPR031404">
    <property type="entry name" value="Rrt14"/>
</dbReference>
<dbReference type="Pfam" id="PF17075">
    <property type="entry name" value="RRT14"/>
    <property type="match status" value="1"/>
</dbReference>
<organism>
    <name type="scientific">Vanderwaltozyma polyspora (strain ATCC 22028 / DSM 70294 / BCRC 21397 / CBS 2163 / NBRC 10782 / NRRL Y-8283 / UCD 57-17)</name>
    <name type="common">Kluyveromyces polysporus</name>
    <dbReference type="NCBI Taxonomy" id="436907"/>
    <lineage>
        <taxon>Eukaryota</taxon>
        <taxon>Fungi</taxon>
        <taxon>Dikarya</taxon>
        <taxon>Ascomycota</taxon>
        <taxon>Saccharomycotina</taxon>
        <taxon>Saccharomycetes</taxon>
        <taxon>Saccharomycetales</taxon>
        <taxon>Saccharomycetaceae</taxon>
        <taxon>Vanderwaltozyma</taxon>
    </lineage>
</organism>
<keyword id="KW-0539">Nucleus</keyword>
<keyword id="KW-1185">Reference proteome</keyword>
<keyword id="KW-0804">Transcription</keyword>
<keyword id="KW-0805">Transcription regulation</keyword>
<gene>
    <name type="primary">RRT14</name>
    <name type="ORF">Kpol_1039p13</name>
</gene>
<protein>
    <recommendedName>
        <fullName>Regulator of rDNA transcription 14</fullName>
    </recommendedName>
</protein>
<name>RRT14_VANPO</name>
<proteinExistence type="inferred from homology"/>
<sequence length="216" mass="24912">MSSTGKATELQATMAVNSLLSNILPGANKMRKSNDNNNNKKNSKGTSKAQLIDRNLKRNLEIMDLDTHKFTKKNKIKKNKKIKKNVIKQNELKEIADLEIFKKHKIENNLTLSEKKKLNKIISKNLNKIKSRELDSDDQEELDDVQKFILDQTSNSQSYNKSKKRKTRRKEFKEFKNPDKNSSMDHRYPGLTPGLAPVGLSDEEDSSDEDDDRNDY</sequence>
<accession>A7THE0</accession>
<comment type="function">
    <text evidence="1">Involved in ribosome biogenesis, probably through modulation of rDNA transcription.</text>
</comment>
<comment type="subcellular location">
    <subcellularLocation>
        <location evidence="1">Nucleus</location>
        <location evidence="1">Nucleolus</location>
    </subcellularLocation>
</comment>
<comment type="similarity">
    <text evidence="3">Belongs to the RRT14 family.</text>
</comment>
<feature type="chain" id="PRO_0000404352" description="Regulator of rDNA transcription 14">
    <location>
        <begin position="1"/>
        <end position="216"/>
    </location>
</feature>
<feature type="region of interest" description="Disordered" evidence="2">
    <location>
        <begin position="26"/>
        <end position="51"/>
    </location>
</feature>
<feature type="region of interest" description="Disordered" evidence="2">
    <location>
        <begin position="153"/>
        <end position="216"/>
    </location>
</feature>
<feature type="compositionally biased region" description="Low complexity" evidence="2">
    <location>
        <begin position="35"/>
        <end position="48"/>
    </location>
</feature>
<feature type="compositionally biased region" description="Basic residues" evidence="2">
    <location>
        <begin position="161"/>
        <end position="170"/>
    </location>
</feature>
<feature type="compositionally biased region" description="Basic and acidic residues" evidence="2">
    <location>
        <begin position="171"/>
        <end position="188"/>
    </location>
</feature>
<feature type="compositionally biased region" description="Acidic residues" evidence="2">
    <location>
        <begin position="201"/>
        <end position="216"/>
    </location>
</feature>
<evidence type="ECO:0000250" key="1"/>
<evidence type="ECO:0000256" key="2">
    <source>
        <dbReference type="SAM" id="MobiDB-lite"/>
    </source>
</evidence>
<evidence type="ECO:0000305" key="3"/>
<reference key="1">
    <citation type="journal article" date="2007" name="Proc. Natl. Acad. Sci. U.S.A.">
        <title>Independent sorting-out of thousands of duplicated gene pairs in two yeast species descended from a whole-genome duplication.</title>
        <authorList>
            <person name="Scannell D.R."/>
            <person name="Frank A.C."/>
            <person name="Conant G.C."/>
            <person name="Byrne K.P."/>
            <person name="Woolfit M."/>
            <person name="Wolfe K.H."/>
        </authorList>
    </citation>
    <scope>NUCLEOTIDE SEQUENCE [LARGE SCALE GENOMIC DNA]</scope>
    <source>
        <strain>ATCC 22028 / DSM 70294 / BCRC 21397 / CBS 2163 / NBRC 10782 / NRRL Y-8283 / UCD 57-17</strain>
    </source>
</reference>